<sequence length="450" mass="50611">MDADKIVFKVNNQVVSLKPEIIVDQYEYKYPAIKDLKKPSITLGKAPDLNKAYKSVLSGLNAAKLDPDDVCSYLAAAMQFFEGTCPEDWTSYGILIARKGDKITPDSLVEIKRTGVEGNWALTGGMELTRDPTVPEHASLVGLLLSLYRLSKISGQNTGNYKTNIADRIEQIFETAPFIKIVEHHTLMTTHKMCANWSTIPNFRFLAGTYDMFFSRIEHLYSAIRVGTVVTAYEDCSGLVSFTGFIKQINLTAREAILYFFHKNFEEEIRRMFEPGQETAVPHSYFIHFRSLGLSGKSPYSSNAVGHVFNLIHFVGCYMGQVRSLNATVIAACAPHEMSVLGGYLGEEFFGKGTFERRFFRDEKELQEYETAELTKTDAALADDGTVNSDDEDYFSGETRSPEAVYARIMMNGGRLKRSHIRRYVSVSSNHQARPNSFAEFLNKTYTSDS</sequence>
<protein>
    <recommendedName>
        <fullName>Nucleoprotein</fullName>
        <shortName>NP</shortName>
    </recommendedName>
    <alternativeName>
        <fullName>Nucleocapsid protein</fullName>
        <shortName>Protein N</shortName>
    </alternativeName>
</protein>
<organismHost>
    <name type="scientific">Homo sapiens</name>
    <name type="common">Human</name>
    <dbReference type="NCBI Taxonomy" id="9606"/>
</organismHost>
<organismHost>
    <name type="scientific">Mammalia</name>
    <dbReference type="NCBI Taxonomy" id="40674"/>
</organismHost>
<gene>
    <name type="primary">N</name>
</gene>
<evidence type="ECO:0000250" key="1"/>
<evidence type="ECO:0000305" key="2"/>
<feature type="chain" id="PRO_0000222820" description="Nucleoprotein">
    <location>
        <begin position="1"/>
        <end position="450"/>
    </location>
</feature>
<feature type="modified residue" description="Phosphoserine; by host CK2" evidence="1">
    <location>
        <position position="389"/>
    </location>
</feature>
<proteinExistence type="inferred from homology"/>
<comment type="function">
    <text evidence="1">Encapsidates the genome in a ratio of one protein N per nine ribonucleotides, protecting it from nucleases. If expressed without protein P it binds non-specifically RNA and therefore can bind it's own mRNA. Interaction with protein P abolishes any non-specific RNA binding, and prevents phosphorylation. The soluble N-P complex encapsidates specifically the genomic RNA, with protein N protecting the genome like a pearl necklace. The encapsidated genomic RNA is termed the nucleocapsid (NC) and serves as template for viral transcription and replication. Protein N binds protein P in the NC through a different interaction, and can be phosphorylated. Subsequent viral replication is dependent on intracellular concentration of newly synthesized protein N. During replication, encapsidation by protein N is coupled to RNA synthesis and all replicative products are resistant to nucleases (By similarity).</text>
</comment>
<comment type="subunit">
    <text evidence="1">Homomultimerizes to form the nucleocapsid. Binds to viral genomic RNA. In nucleocapsid, binds protein P and thereby positions the polymerase on the template. Protein P acts as a chaperone on free protein N to prevent it from aggregation before encapsidating genomic RNA (By similarity).</text>
</comment>
<comment type="subcellular location">
    <subcellularLocation>
        <location>Virion</location>
    </subcellularLocation>
    <subcellularLocation>
        <location evidence="1">Host cytoplasm</location>
    </subcellularLocation>
</comment>
<comment type="PTM">
    <text evidence="1">Phosphorylated by host CK2. Unphosphorylated protein N seems to have a better affinity for leader viral promoter encapsidation. Phosphorylation of protein N in ribonucleocapsid may stabilize the interaction with protein P, thereby playing an important role in viral transcription/replication (By similarity).</text>
</comment>
<comment type="miscellaneous">
    <text evidence="1">Displays a superantigen activity in human and mouse, activating mostly V-beta-8 subtypes of T-cell receptor.</text>
</comment>
<comment type="similarity">
    <text evidence="2">Belongs to the lyssavirus nucleocapsid protein family.</text>
</comment>
<keyword id="KW-0167">Capsid protein</keyword>
<keyword id="KW-1139">Helical capsid protein</keyword>
<keyword id="KW-1035">Host cytoplasm</keyword>
<keyword id="KW-0597">Phosphoprotein</keyword>
<keyword id="KW-0687">Ribonucleoprotein</keyword>
<keyword id="KW-0694">RNA-binding</keyword>
<keyword id="KW-0766">Superantigen</keyword>
<keyword id="KW-0543">Viral nucleoprotein</keyword>
<keyword id="KW-0946">Virion</keyword>
<name>NCAP_RABVU</name>
<dbReference type="EMBL" id="L20671">
    <property type="protein sequence ID" value="AAA47220.1"/>
    <property type="molecule type" value="Genomic_RNA"/>
</dbReference>
<dbReference type="SMR" id="Q09110"/>
<dbReference type="GO" id="GO:0019029">
    <property type="term" value="C:helical viral capsid"/>
    <property type="evidence" value="ECO:0007669"/>
    <property type="project" value="UniProtKB-KW"/>
</dbReference>
<dbReference type="GO" id="GO:0030430">
    <property type="term" value="C:host cell cytoplasm"/>
    <property type="evidence" value="ECO:0007669"/>
    <property type="project" value="UniProtKB-SubCell"/>
</dbReference>
<dbReference type="GO" id="GO:1990904">
    <property type="term" value="C:ribonucleoprotein complex"/>
    <property type="evidence" value="ECO:0007669"/>
    <property type="project" value="UniProtKB-KW"/>
</dbReference>
<dbReference type="GO" id="GO:0019013">
    <property type="term" value="C:viral nucleocapsid"/>
    <property type="evidence" value="ECO:0007669"/>
    <property type="project" value="UniProtKB-KW"/>
</dbReference>
<dbReference type="GO" id="GO:0003723">
    <property type="term" value="F:RNA binding"/>
    <property type="evidence" value="ECO:0007669"/>
    <property type="project" value="UniProtKB-KW"/>
</dbReference>
<dbReference type="Gene3D" id="1.10.3610.10">
    <property type="entry name" value="Nucleoprotein"/>
    <property type="match status" value="1"/>
</dbReference>
<dbReference type="Gene3D" id="1.10.3570.10">
    <property type="entry name" value="Rhabdovirus nucleocapsid protein like domain"/>
    <property type="match status" value="1"/>
</dbReference>
<dbReference type="InterPro" id="IPR000448">
    <property type="entry name" value="Rhabdo_ncapsid"/>
</dbReference>
<dbReference type="InterPro" id="IPR023331">
    <property type="entry name" value="Rhabdovirus_ncapsid_C"/>
</dbReference>
<dbReference type="InterPro" id="IPR023330">
    <property type="entry name" value="Rhabdovirus_ncapsid_N"/>
</dbReference>
<dbReference type="InterPro" id="IPR035961">
    <property type="entry name" value="Rhabdovirus_nucleoprotein-like"/>
</dbReference>
<dbReference type="Pfam" id="PF00945">
    <property type="entry name" value="Rhabdo_ncap"/>
    <property type="match status" value="1"/>
</dbReference>
<dbReference type="SUPFAM" id="SSF140809">
    <property type="entry name" value="Rhabdovirus nucleoprotein-like"/>
    <property type="match status" value="1"/>
</dbReference>
<reference key="1">
    <citation type="journal article" date="1993" name="J. Gen. Virol.">
        <title>Identification of regional variants of the rabies virus within the Canadian province of Ontario.</title>
        <authorList>
            <person name="Nadin-Davis S.A."/>
            <person name="Casey G.A."/>
            <person name="Wandeler A."/>
        </authorList>
    </citation>
    <scope>NUCLEOTIDE SEQUENCE [GENOMIC RNA]</scope>
</reference>
<accession>Q09110</accession>
<organism>
    <name type="scientific">Rabies virus (isolate Skunk/Ontario/1991)</name>
    <name type="common">RABV</name>
    <dbReference type="NCBI Taxonomy" id="39005"/>
    <lineage>
        <taxon>Viruses</taxon>
        <taxon>Riboviria</taxon>
        <taxon>Orthornavirae</taxon>
        <taxon>Negarnaviricota</taxon>
        <taxon>Haploviricotina</taxon>
        <taxon>Monjiviricetes</taxon>
        <taxon>Mononegavirales</taxon>
        <taxon>Rhabdoviridae</taxon>
        <taxon>Alpharhabdovirinae</taxon>
        <taxon>Lyssavirus</taxon>
        <taxon>Lyssavirus rabies</taxon>
    </lineage>
</organism>